<feature type="chain" id="PRO_0000156490" description="Polyamine aminopropyltransferase">
    <location>
        <begin position="1"/>
        <end position="263"/>
    </location>
</feature>
<feature type="domain" description="PABS" evidence="1">
    <location>
        <begin position="1"/>
        <end position="221"/>
    </location>
</feature>
<feature type="active site" description="Proton acceptor" evidence="1">
    <location>
        <position position="144"/>
    </location>
</feature>
<feature type="binding site" evidence="1">
    <location>
        <position position="98"/>
    </location>
    <ligand>
        <name>S-methyl-5'-thioadenosine</name>
        <dbReference type="ChEBI" id="CHEBI:17509"/>
    </ligand>
</feature>
<feature type="binding site" evidence="1">
    <location>
        <begin position="126"/>
        <end position="127"/>
    </location>
    <ligand>
        <name>S-methyl-5'-thioadenosine</name>
        <dbReference type="ChEBI" id="CHEBI:17509"/>
    </ligand>
</feature>
<dbReference type="EC" id="2.5.1.16" evidence="1"/>
<dbReference type="EMBL" id="AE002098">
    <property type="protein sequence ID" value="AAF41280.1"/>
    <property type="molecule type" value="Genomic_DNA"/>
</dbReference>
<dbReference type="RefSeq" id="NP_273910.1">
    <property type="nucleotide sequence ID" value="NC_003112.2"/>
</dbReference>
<dbReference type="RefSeq" id="WP_002225376.1">
    <property type="nucleotide sequence ID" value="NC_003112.2"/>
</dbReference>
<dbReference type="SMR" id="P60594"/>
<dbReference type="STRING" id="122586.NMB0869"/>
<dbReference type="PaxDb" id="122586-NMB0869"/>
<dbReference type="KEGG" id="nme:NMB0869"/>
<dbReference type="PATRIC" id="fig|122586.8.peg.1082"/>
<dbReference type="HOGENOM" id="CLU_060070_1_0_4"/>
<dbReference type="InParanoid" id="P60594"/>
<dbReference type="OrthoDB" id="117774at2"/>
<dbReference type="UniPathway" id="UPA00248">
    <property type="reaction ID" value="UER00314"/>
</dbReference>
<dbReference type="Proteomes" id="UP000000425">
    <property type="component" value="Chromosome"/>
</dbReference>
<dbReference type="GO" id="GO:0005737">
    <property type="term" value="C:cytoplasm"/>
    <property type="evidence" value="ECO:0007669"/>
    <property type="project" value="UniProtKB-SubCell"/>
</dbReference>
<dbReference type="GO" id="GO:0004766">
    <property type="term" value="F:spermidine synthase activity"/>
    <property type="evidence" value="ECO:0007669"/>
    <property type="project" value="UniProtKB-UniRule"/>
</dbReference>
<dbReference type="GO" id="GO:0010487">
    <property type="term" value="F:thermospermine synthase activity"/>
    <property type="evidence" value="ECO:0007669"/>
    <property type="project" value="UniProtKB-ARBA"/>
</dbReference>
<dbReference type="GO" id="GO:0006596">
    <property type="term" value="P:polyamine biosynthetic process"/>
    <property type="evidence" value="ECO:0000318"/>
    <property type="project" value="GO_Central"/>
</dbReference>
<dbReference type="GO" id="GO:0008295">
    <property type="term" value="P:spermidine biosynthetic process"/>
    <property type="evidence" value="ECO:0007669"/>
    <property type="project" value="UniProtKB-UniRule"/>
</dbReference>
<dbReference type="CDD" id="cd02440">
    <property type="entry name" value="AdoMet_MTases"/>
    <property type="match status" value="1"/>
</dbReference>
<dbReference type="FunFam" id="3.40.50.150:FF:000476">
    <property type="entry name" value="Polyamine aminopropyltransferase"/>
    <property type="match status" value="1"/>
</dbReference>
<dbReference type="Gene3D" id="3.40.50.150">
    <property type="entry name" value="Vaccinia Virus protein VP39"/>
    <property type="match status" value="1"/>
</dbReference>
<dbReference type="HAMAP" id="MF_00198">
    <property type="entry name" value="Spermidine_synth"/>
    <property type="match status" value="1"/>
</dbReference>
<dbReference type="InterPro" id="IPR030374">
    <property type="entry name" value="PABS"/>
</dbReference>
<dbReference type="InterPro" id="IPR029063">
    <property type="entry name" value="SAM-dependent_MTases_sf"/>
</dbReference>
<dbReference type="InterPro" id="IPR001045">
    <property type="entry name" value="Spermi_synthase"/>
</dbReference>
<dbReference type="NCBIfam" id="NF037959">
    <property type="entry name" value="MFS_SpdSyn"/>
    <property type="match status" value="1"/>
</dbReference>
<dbReference type="NCBIfam" id="NF003380">
    <property type="entry name" value="PRK04457.1"/>
    <property type="match status" value="1"/>
</dbReference>
<dbReference type="PANTHER" id="PTHR43317">
    <property type="entry name" value="THERMOSPERMINE SYNTHASE ACAULIS5"/>
    <property type="match status" value="1"/>
</dbReference>
<dbReference type="PANTHER" id="PTHR43317:SF1">
    <property type="entry name" value="THERMOSPERMINE SYNTHASE ACAULIS5"/>
    <property type="match status" value="1"/>
</dbReference>
<dbReference type="Pfam" id="PF01564">
    <property type="entry name" value="Spermine_synth"/>
    <property type="match status" value="1"/>
</dbReference>
<dbReference type="SUPFAM" id="SSF53335">
    <property type="entry name" value="S-adenosyl-L-methionine-dependent methyltransferases"/>
    <property type="match status" value="1"/>
</dbReference>
<dbReference type="PROSITE" id="PS51006">
    <property type="entry name" value="PABS_2"/>
    <property type="match status" value="1"/>
</dbReference>
<name>SPEE_NEIMB</name>
<keyword id="KW-0963">Cytoplasm</keyword>
<keyword id="KW-0620">Polyamine biosynthesis</keyword>
<keyword id="KW-1185">Reference proteome</keyword>
<keyword id="KW-0745">Spermidine biosynthesis</keyword>
<keyword id="KW-0808">Transferase</keyword>
<evidence type="ECO:0000255" key="1">
    <source>
        <dbReference type="HAMAP-Rule" id="MF_00198"/>
    </source>
</evidence>
<reference key="1">
    <citation type="journal article" date="2000" name="Science">
        <title>Complete genome sequence of Neisseria meningitidis serogroup B strain MC58.</title>
        <authorList>
            <person name="Tettelin H."/>
            <person name="Saunders N.J."/>
            <person name="Heidelberg J.F."/>
            <person name="Jeffries A.C."/>
            <person name="Nelson K.E."/>
            <person name="Eisen J.A."/>
            <person name="Ketchum K.A."/>
            <person name="Hood D.W."/>
            <person name="Peden J.F."/>
            <person name="Dodson R.J."/>
            <person name="Nelson W.C."/>
            <person name="Gwinn M.L."/>
            <person name="DeBoy R.T."/>
            <person name="Peterson J.D."/>
            <person name="Hickey E.K."/>
            <person name="Haft D.H."/>
            <person name="Salzberg S.L."/>
            <person name="White O."/>
            <person name="Fleischmann R.D."/>
            <person name="Dougherty B.A."/>
            <person name="Mason T.M."/>
            <person name="Ciecko A."/>
            <person name="Parksey D.S."/>
            <person name="Blair E."/>
            <person name="Cittone H."/>
            <person name="Clark E.B."/>
            <person name="Cotton M.D."/>
            <person name="Utterback T.R."/>
            <person name="Khouri H.M."/>
            <person name="Qin H."/>
            <person name="Vamathevan J.J."/>
            <person name="Gill J."/>
            <person name="Scarlato V."/>
            <person name="Masignani V."/>
            <person name="Pizza M."/>
            <person name="Grandi G."/>
            <person name="Sun L."/>
            <person name="Smith H.O."/>
            <person name="Fraser C.M."/>
            <person name="Moxon E.R."/>
            <person name="Rappuoli R."/>
            <person name="Venter J.C."/>
        </authorList>
    </citation>
    <scope>NUCLEOTIDE SEQUENCE [LARGE SCALE GENOMIC DNA]</scope>
    <source>
        <strain>ATCC BAA-335 / MC58</strain>
    </source>
</reference>
<accession>P60594</accession>
<accession>Q9JQL8</accession>
<proteinExistence type="inferred from homology"/>
<organism>
    <name type="scientific">Neisseria meningitidis serogroup B (strain ATCC BAA-335 / MC58)</name>
    <dbReference type="NCBI Taxonomy" id="122586"/>
    <lineage>
        <taxon>Bacteria</taxon>
        <taxon>Pseudomonadati</taxon>
        <taxon>Pseudomonadota</taxon>
        <taxon>Betaproteobacteria</taxon>
        <taxon>Neisseriales</taxon>
        <taxon>Neisseriaceae</taxon>
        <taxon>Neisseria</taxon>
    </lineage>
</organism>
<comment type="function">
    <text evidence="1">Catalyzes the irreversible transfer of a propylamine group from the amino donor S-adenosylmethioninamine (decarboxy-AdoMet) to putrescine (1,4-diaminobutane) to yield spermidine.</text>
</comment>
<comment type="catalytic activity">
    <reaction evidence="1">
        <text>S-adenosyl 3-(methylsulfanyl)propylamine + putrescine = S-methyl-5'-thioadenosine + spermidine + H(+)</text>
        <dbReference type="Rhea" id="RHEA:12721"/>
        <dbReference type="ChEBI" id="CHEBI:15378"/>
        <dbReference type="ChEBI" id="CHEBI:17509"/>
        <dbReference type="ChEBI" id="CHEBI:57443"/>
        <dbReference type="ChEBI" id="CHEBI:57834"/>
        <dbReference type="ChEBI" id="CHEBI:326268"/>
        <dbReference type="EC" id="2.5.1.16"/>
    </reaction>
</comment>
<comment type="pathway">
    <text evidence="1">Amine and polyamine biosynthesis; spermidine biosynthesis; spermidine from putrescine: step 1/1.</text>
</comment>
<comment type="subunit">
    <text evidence="1">Homodimer or homotetramer.</text>
</comment>
<comment type="subcellular location">
    <subcellularLocation>
        <location evidence="1">Cytoplasm</location>
    </subcellularLocation>
</comment>
<comment type="similarity">
    <text evidence="1">Belongs to the spermidine/spermine synthase family.</text>
</comment>
<gene>
    <name evidence="1" type="primary">speE</name>
    <name type="ordered locus">NMB0869</name>
</gene>
<sequence>MARHPYRRLRPAKSGFPEVGISEEGNIRSLHLGSDTVQSSMNLDHPSELVLSYSRAMMGWLLFTDALPQHITQIGLGGGSFARWIDTYLPDTRQTAVDINPQVIAIARNLFELPFEGEKFEIIEADGAEYIKVFRHNTDVILVDGFDGEQIIDALVEEPFFRDCRNALSSDGIFVTNWWSGDKRYQRFIERLLSVFEGRVLELPAESHGNVAVMAFQSSPKEQNIDKLKKRADKLSNAYGLDFHRMLAGLKASNPNNGKHFHL</sequence>
<protein>
    <recommendedName>
        <fullName evidence="1">Polyamine aminopropyltransferase</fullName>
    </recommendedName>
    <alternativeName>
        <fullName evidence="1">Putrescine aminopropyltransferase</fullName>
        <shortName evidence="1">PAPT</shortName>
    </alternativeName>
    <alternativeName>
        <fullName evidence="1">Spermidine synthase</fullName>
        <shortName evidence="1">SPDS</shortName>
        <shortName evidence="1">SPDSY</shortName>
        <ecNumber evidence="1">2.5.1.16</ecNumber>
    </alternativeName>
</protein>